<protein>
    <recommendedName>
        <fullName evidence="1">Protein Smg</fullName>
    </recommendedName>
</protein>
<accession>A4WF93</accession>
<reference key="1">
    <citation type="journal article" date="2010" name="PLoS Genet.">
        <title>Genome sequence of the plant growth promoting endophytic bacterium Enterobacter sp. 638.</title>
        <authorList>
            <person name="Taghavi S."/>
            <person name="van der Lelie D."/>
            <person name="Hoffman A."/>
            <person name="Zhang Y.B."/>
            <person name="Walla M.D."/>
            <person name="Vangronsveld J."/>
            <person name="Newman L."/>
            <person name="Monchy S."/>
        </authorList>
    </citation>
    <scope>NUCLEOTIDE SEQUENCE [LARGE SCALE GENOMIC DNA]</scope>
    <source>
        <strain>638</strain>
    </source>
</reference>
<sequence length="157" mass="18544">MFDVLMYLFETYIHNEAEMRVDQDRLTRDLTDAGFEREDIYNALLWLEKLADYQEGLVEPMQLASDPLSVRIYTAEECERLDASCRGFVLFLEQIQVLNLETREMVIERVMALDTAEFELEDLKWVILMVLFNIPGCENAYQQMEELLFEVNEGMLH</sequence>
<comment type="similarity">
    <text evidence="1">Belongs to the Smg family.</text>
</comment>
<dbReference type="EMBL" id="CP000653">
    <property type="protein sequence ID" value="ABP62373.1"/>
    <property type="molecule type" value="Genomic_DNA"/>
</dbReference>
<dbReference type="RefSeq" id="WP_015960694.1">
    <property type="nucleotide sequence ID" value="NC_009436.1"/>
</dbReference>
<dbReference type="SMR" id="A4WF93"/>
<dbReference type="STRING" id="399742.Ent638_3716"/>
<dbReference type="KEGG" id="ent:Ent638_3716"/>
<dbReference type="eggNOG" id="COG2922">
    <property type="taxonomic scope" value="Bacteria"/>
</dbReference>
<dbReference type="HOGENOM" id="CLU_133242_0_0_6"/>
<dbReference type="OrthoDB" id="9788984at2"/>
<dbReference type="Proteomes" id="UP000000230">
    <property type="component" value="Chromosome"/>
</dbReference>
<dbReference type="HAMAP" id="MF_00598">
    <property type="entry name" value="Smg"/>
    <property type="match status" value="1"/>
</dbReference>
<dbReference type="InterPro" id="IPR007456">
    <property type="entry name" value="Smg"/>
</dbReference>
<dbReference type="NCBIfam" id="NF002897">
    <property type="entry name" value="PRK03430.1"/>
    <property type="match status" value="1"/>
</dbReference>
<dbReference type="PANTHER" id="PTHR38692">
    <property type="entry name" value="PROTEIN SMG"/>
    <property type="match status" value="1"/>
</dbReference>
<dbReference type="PANTHER" id="PTHR38692:SF1">
    <property type="entry name" value="PROTEIN SMG"/>
    <property type="match status" value="1"/>
</dbReference>
<dbReference type="Pfam" id="PF04361">
    <property type="entry name" value="DUF494"/>
    <property type="match status" value="1"/>
</dbReference>
<evidence type="ECO:0000255" key="1">
    <source>
        <dbReference type="HAMAP-Rule" id="MF_00598"/>
    </source>
</evidence>
<name>SMG_ENT38</name>
<gene>
    <name evidence="1" type="primary">smg</name>
    <name type="ordered locus">Ent638_3716</name>
</gene>
<organism>
    <name type="scientific">Enterobacter sp. (strain 638)</name>
    <dbReference type="NCBI Taxonomy" id="399742"/>
    <lineage>
        <taxon>Bacteria</taxon>
        <taxon>Pseudomonadati</taxon>
        <taxon>Pseudomonadota</taxon>
        <taxon>Gammaproteobacteria</taxon>
        <taxon>Enterobacterales</taxon>
        <taxon>Enterobacteriaceae</taxon>
        <taxon>Enterobacter</taxon>
    </lineage>
</organism>
<proteinExistence type="inferred from homology"/>
<feature type="chain" id="PRO_1000061242" description="Protein Smg">
    <location>
        <begin position="1"/>
        <end position="157"/>
    </location>
</feature>